<dbReference type="EC" id="3.1.3.5" evidence="1"/>
<dbReference type="EMBL" id="CP000050">
    <property type="protein sequence ID" value="AAY49575.1"/>
    <property type="molecule type" value="Genomic_DNA"/>
</dbReference>
<dbReference type="RefSeq" id="WP_011036883.1">
    <property type="nucleotide sequence ID" value="NZ_CP155948.1"/>
</dbReference>
<dbReference type="SMR" id="Q4UTP8"/>
<dbReference type="KEGG" id="xcb:XC_2525"/>
<dbReference type="HOGENOM" id="CLU_045192_1_2_6"/>
<dbReference type="Proteomes" id="UP000000420">
    <property type="component" value="Chromosome"/>
</dbReference>
<dbReference type="GO" id="GO:0005737">
    <property type="term" value="C:cytoplasm"/>
    <property type="evidence" value="ECO:0007669"/>
    <property type="project" value="UniProtKB-SubCell"/>
</dbReference>
<dbReference type="GO" id="GO:0008254">
    <property type="term" value="F:3'-nucleotidase activity"/>
    <property type="evidence" value="ECO:0007669"/>
    <property type="project" value="TreeGrafter"/>
</dbReference>
<dbReference type="GO" id="GO:0008253">
    <property type="term" value="F:5'-nucleotidase activity"/>
    <property type="evidence" value="ECO:0007669"/>
    <property type="project" value="UniProtKB-UniRule"/>
</dbReference>
<dbReference type="GO" id="GO:0004309">
    <property type="term" value="F:exopolyphosphatase activity"/>
    <property type="evidence" value="ECO:0007669"/>
    <property type="project" value="TreeGrafter"/>
</dbReference>
<dbReference type="GO" id="GO:0046872">
    <property type="term" value="F:metal ion binding"/>
    <property type="evidence" value="ECO:0007669"/>
    <property type="project" value="UniProtKB-UniRule"/>
</dbReference>
<dbReference type="GO" id="GO:0000166">
    <property type="term" value="F:nucleotide binding"/>
    <property type="evidence" value="ECO:0007669"/>
    <property type="project" value="UniProtKB-KW"/>
</dbReference>
<dbReference type="FunFam" id="3.40.1210.10:FF:000001">
    <property type="entry name" value="5'/3'-nucleotidase SurE"/>
    <property type="match status" value="1"/>
</dbReference>
<dbReference type="Gene3D" id="3.40.1210.10">
    <property type="entry name" value="Survival protein SurE-like phosphatase/nucleotidase"/>
    <property type="match status" value="1"/>
</dbReference>
<dbReference type="HAMAP" id="MF_00060">
    <property type="entry name" value="SurE"/>
    <property type="match status" value="1"/>
</dbReference>
<dbReference type="InterPro" id="IPR030048">
    <property type="entry name" value="SurE"/>
</dbReference>
<dbReference type="InterPro" id="IPR002828">
    <property type="entry name" value="SurE-like_Pase/nucleotidase"/>
</dbReference>
<dbReference type="InterPro" id="IPR036523">
    <property type="entry name" value="SurE-like_sf"/>
</dbReference>
<dbReference type="NCBIfam" id="NF001489">
    <property type="entry name" value="PRK00346.1-3"/>
    <property type="match status" value="1"/>
</dbReference>
<dbReference type="NCBIfam" id="NF001490">
    <property type="entry name" value="PRK00346.1-4"/>
    <property type="match status" value="1"/>
</dbReference>
<dbReference type="NCBIfam" id="TIGR00087">
    <property type="entry name" value="surE"/>
    <property type="match status" value="1"/>
</dbReference>
<dbReference type="PANTHER" id="PTHR30457">
    <property type="entry name" value="5'-NUCLEOTIDASE SURE"/>
    <property type="match status" value="1"/>
</dbReference>
<dbReference type="PANTHER" id="PTHR30457:SF12">
    <property type="entry name" value="5'_3'-NUCLEOTIDASE SURE"/>
    <property type="match status" value="1"/>
</dbReference>
<dbReference type="Pfam" id="PF01975">
    <property type="entry name" value="SurE"/>
    <property type="match status" value="1"/>
</dbReference>
<dbReference type="SUPFAM" id="SSF64167">
    <property type="entry name" value="SurE-like"/>
    <property type="match status" value="1"/>
</dbReference>
<keyword id="KW-0963">Cytoplasm</keyword>
<keyword id="KW-0378">Hydrolase</keyword>
<keyword id="KW-0479">Metal-binding</keyword>
<keyword id="KW-0547">Nucleotide-binding</keyword>
<feature type="chain" id="PRO_0000235669" description="5'-nucleotidase SurE">
    <location>
        <begin position="1"/>
        <end position="259"/>
    </location>
</feature>
<feature type="binding site" evidence="1">
    <location>
        <position position="8"/>
    </location>
    <ligand>
        <name>a divalent metal cation</name>
        <dbReference type="ChEBI" id="CHEBI:60240"/>
    </ligand>
</feature>
<feature type="binding site" evidence="1">
    <location>
        <position position="9"/>
    </location>
    <ligand>
        <name>a divalent metal cation</name>
        <dbReference type="ChEBI" id="CHEBI:60240"/>
    </ligand>
</feature>
<feature type="binding site" evidence="1">
    <location>
        <position position="40"/>
    </location>
    <ligand>
        <name>a divalent metal cation</name>
        <dbReference type="ChEBI" id="CHEBI:60240"/>
    </ligand>
</feature>
<feature type="binding site" evidence="1">
    <location>
        <position position="92"/>
    </location>
    <ligand>
        <name>a divalent metal cation</name>
        <dbReference type="ChEBI" id="CHEBI:60240"/>
    </ligand>
</feature>
<gene>
    <name evidence="1" type="primary">surE</name>
    <name type="ordered locus">XC_2525</name>
</gene>
<name>SURE_XANC8</name>
<comment type="function">
    <text evidence="1">Nucleotidase that shows phosphatase activity on nucleoside 5'-monophosphates.</text>
</comment>
<comment type="catalytic activity">
    <reaction evidence="1">
        <text>a ribonucleoside 5'-phosphate + H2O = a ribonucleoside + phosphate</text>
        <dbReference type="Rhea" id="RHEA:12484"/>
        <dbReference type="ChEBI" id="CHEBI:15377"/>
        <dbReference type="ChEBI" id="CHEBI:18254"/>
        <dbReference type="ChEBI" id="CHEBI:43474"/>
        <dbReference type="ChEBI" id="CHEBI:58043"/>
        <dbReference type="EC" id="3.1.3.5"/>
    </reaction>
</comment>
<comment type="cofactor">
    <cofactor evidence="1">
        <name>a divalent metal cation</name>
        <dbReference type="ChEBI" id="CHEBI:60240"/>
    </cofactor>
    <text evidence="1">Binds 1 divalent metal cation per subunit.</text>
</comment>
<comment type="subcellular location">
    <subcellularLocation>
        <location evidence="1">Cytoplasm</location>
    </subcellularLocation>
</comment>
<comment type="similarity">
    <text evidence="1">Belongs to the SurE nucleotidase family.</text>
</comment>
<evidence type="ECO:0000255" key="1">
    <source>
        <dbReference type="HAMAP-Rule" id="MF_00060"/>
    </source>
</evidence>
<reference key="1">
    <citation type="journal article" date="2005" name="Genome Res.">
        <title>Comparative and functional genomic analyses of the pathogenicity of phytopathogen Xanthomonas campestris pv. campestris.</title>
        <authorList>
            <person name="Qian W."/>
            <person name="Jia Y."/>
            <person name="Ren S.-X."/>
            <person name="He Y.-Q."/>
            <person name="Feng J.-X."/>
            <person name="Lu L.-F."/>
            <person name="Sun Q."/>
            <person name="Ying G."/>
            <person name="Tang D.-J."/>
            <person name="Tang H."/>
            <person name="Wu W."/>
            <person name="Hao P."/>
            <person name="Wang L."/>
            <person name="Jiang B.-L."/>
            <person name="Zeng S."/>
            <person name="Gu W.-Y."/>
            <person name="Lu G."/>
            <person name="Rong L."/>
            <person name="Tian Y."/>
            <person name="Yao Z."/>
            <person name="Fu G."/>
            <person name="Chen B."/>
            <person name="Fang R."/>
            <person name="Qiang B."/>
            <person name="Chen Z."/>
            <person name="Zhao G.-P."/>
            <person name="Tang J.-L."/>
            <person name="He C."/>
        </authorList>
    </citation>
    <scope>NUCLEOTIDE SEQUENCE [LARGE SCALE GENOMIC DNA]</scope>
    <source>
        <strain>8004</strain>
    </source>
</reference>
<organism>
    <name type="scientific">Xanthomonas campestris pv. campestris (strain 8004)</name>
    <dbReference type="NCBI Taxonomy" id="314565"/>
    <lineage>
        <taxon>Bacteria</taxon>
        <taxon>Pseudomonadati</taxon>
        <taxon>Pseudomonadota</taxon>
        <taxon>Gammaproteobacteria</taxon>
        <taxon>Lysobacterales</taxon>
        <taxon>Lysobacteraceae</taxon>
        <taxon>Xanthomonas</taxon>
    </lineage>
</organism>
<protein>
    <recommendedName>
        <fullName evidence="1">5'-nucleotidase SurE</fullName>
        <ecNumber evidence="1">3.1.3.5</ecNumber>
    </recommendedName>
    <alternativeName>
        <fullName evidence="1">Nucleoside 5'-monophosphate phosphohydrolase</fullName>
    </alternativeName>
</protein>
<sequence length="259" mass="27356">MRVLVSNDDGVDAPGIQILAEALRRAGHEVMVVAPDRDRSGASNSLTLDVPIRTRRIDAQTCAVAGTPTDCVHLALTGMLDYDPDIVVSGINNSANLGDDVIYSGTVSAAMEGRFLGLPAVAVSLVTQNHEAHHFETAARAAVEIVARLKADPLPADTILNVNVPDLAWADVLGFEVTRLGNRHRSEPCVPQNDPRGRTVYWIGPAGPEQDAGAGTDFHAVRTGHISITPIHVDLTRYQALDTVAGWVGGLTAALDAPA</sequence>
<proteinExistence type="inferred from homology"/>
<accession>Q4UTP8</accession>